<comment type="function">
    <text evidence="1">Plays an essential role for maintaining proper localization of the seven-protein complex and the viroplasm during assembly.</text>
</comment>
<comment type="subcellular location">
    <subcellularLocation>
        <location evidence="1">Virion</location>
    </subcellularLocation>
    <subcellularLocation>
        <location evidence="1">Host cytoplasm</location>
    </subcellularLocation>
    <text evidence="1">Localizes in viroplasm and in the mature virion (MV).</text>
</comment>
<comment type="induction">
    <text evidence="1">Expressed in the intermediate phase of the viral replicative cycle.</text>
</comment>
<comment type="similarity">
    <text evidence="2">Belongs to the orthopoxvirus OPG068 family.</text>
</comment>
<feature type="chain" id="PRO_0000099456" description="Protein OPG068">
    <location>
        <begin position="1"/>
        <end position="567"/>
    </location>
</feature>
<keyword id="KW-1035">Host cytoplasm</keyword>
<keyword id="KW-0426">Late protein</keyword>
<keyword id="KW-1185">Reference proteome</keyword>
<keyword id="KW-0946">Virion</keyword>
<evidence type="ECO:0000250" key="1">
    <source>
        <dbReference type="UniProtKB" id="P21607"/>
    </source>
</evidence>
<evidence type="ECO:0000305" key="2"/>
<organism>
    <name type="scientific">Variola virus (isolate Human/India/Ind3/1967)</name>
    <name type="common">VARV</name>
    <name type="synonym">Smallpox virus</name>
    <dbReference type="NCBI Taxonomy" id="587200"/>
    <lineage>
        <taxon>Viruses</taxon>
        <taxon>Varidnaviria</taxon>
        <taxon>Bamfordvirae</taxon>
        <taxon>Nucleocytoviricota</taxon>
        <taxon>Pokkesviricetes</taxon>
        <taxon>Chitovirales</taxon>
        <taxon>Poxviridae</taxon>
        <taxon>Chordopoxvirinae</taxon>
        <taxon>Orthopoxvirus</taxon>
        <taxon>Variola virus</taxon>
    </lineage>
</organism>
<organismHost>
    <name type="scientific">Homo sapiens</name>
    <name type="common">Human</name>
    <dbReference type="NCBI Taxonomy" id="9606"/>
</organismHost>
<accession>P0DSX1</accession>
<accession>P33819</accession>
<name>PG068_VAR67</name>
<gene>
    <name type="primary">OPG068</name>
    <name type="synonym">E6R</name>
</gene>
<proteinExistence type="inferred from homology"/>
<sequence length="567" mass="66717">MDFIRRKYLIYTVENNIDFLKDDTLSKVNNFTLNHVLALKYLVSNFPQHVITKDVLANTNFFVFIHMVRCCKVYEAVLRHAFDAPTLYVKALTKNYLSFSNAIQSYKETVHKLTQDEKFLEVAEYMEELGELIGVNYDLVLNPLFHGGEPIKDMEIIFLKLFKKTDFKVVKKLSVIRLLIWAYLSKKDTGIEFADNDRQDIYTLFQHTGRIVHSNLTETFRDYIFPGDKTSYWVWLNESIANDADIVLNRPAITMYDKILSYIYSEIKQGRVNKNMLKLVYIFEPEKDIRELLLEIIYDIPGDILSIIDAKNDDWKKYFISFYKANFINGNTFISDRTFNEDLFRVVVQIDPEYFDNERIMSLFSTSAVEIKRFDELDINNSYISNIIYEVNDITLDTMDDMKKCQIFNEDTSYYVKEYNTYLFLNETDPMVIENGILKKLSSIKSKSRRLNLFSKNILKYYLDGQLARLGLVLDDYKGDLLVKMINHLKFVEDVSAFVRFSTDKNPSVLPSLINTILASYNISIIVLFQKFLRDNLYHVEKFLDKSIHLTKTDKKYILQLIRHGRS</sequence>
<protein>
    <recommendedName>
        <fullName>Protein OPG068</fullName>
    </recommendedName>
    <alternativeName>
        <fullName>Protein E6</fullName>
    </alternativeName>
</protein>
<dbReference type="EMBL" id="X69198">
    <property type="protein sequence ID" value="CAA48988.1"/>
    <property type="molecule type" value="Genomic_DNA"/>
</dbReference>
<dbReference type="PIR" id="I36841">
    <property type="entry name" value="I36841"/>
</dbReference>
<dbReference type="RefSeq" id="NP_042091.1">
    <property type="nucleotide sequence ID" value="NC_001611.1"/>
</dbReference>
<dbReference type="GeneID" id="1486412"/>
<dbReference type="KEGG" id="vg:1486412"/>
<dbReference type="Proteomes" id="UP000002060">
    <property type="component" value="Segment"/>
</dbReference>
<dbReference type="GO" id="GO:0030430">
    <property type="term" value="C:host cell cytoplasm"/>
    <property type="evidence" value="ECO:0007669"/>
    <property type="project" value="UniProtKB-SubCell"/>
</dbReference>
<dbReference type="GO" id="GO:0044423">
    <property type="term" value="C:virion component"/>
    <property type="evidence" value="ECO:0007669"/>
    <property type="project" value="UniProtKB-KW"/>
</dbReference>
<dbReference type="InterPro" id="IPR006749">
    <property type="entry name" value="Pox_E6"/>
</dbReference>
<dbReference type="Pfam" id="PF04656">
    <property type="entry name" value="Pox_E6"/>
    <property type="match status" value="1"/>
</dbReference>
<dbReference type="PIRSF" id="PIRSF015629">
    <property type="entry name" value="VAC_E6R"/>
    <property type="match status" value="1"/>
</dbReference>
<reference key="1">
    <citation type="journal article" date="1993" name="Virus Res.">
        <title>Analysis of the nucleotide sequence of a 43 kbp segment of the genome of variola virus India-1967 strain.</title>
        <authorList>
            <person name="Shchelkunov S.N."/>
            <person name="Blinov V.M."/>
            <person name="Resenchuk S.M."/>
            <person name="Totmenin A.V."/>
            <person name="Sandakhchiev L.S."/>
        </authorList>
    </citation>
    <scope>NUCLEOTIDE SEQUENCE [GENOMIC DNA]</scope>
</reference>
<reference key="2">
    <citation type="journal article" date="1993" name="FEBS Lett.">
        <title>Genes of variola and vaccinia viruses necessary to overcome the host protective mechanisms.</title>
        <authorList>
            <person name="Shchelkunov S.N."/>
            <person name="Blinov V.M."/>
            <person name="Sandakhchiev L.S."/>
        </authorList>
    </citation>
    <scope>NUCLEOTIDE SEQUENCE [LARGE SCALE GENOMIC DNA]</scope>
</reference>